<sequence length="307" mass="34001">MGTGLSLSPSYRKATLFEDGAATVGHYTAVQNSKNAKDKNLKRHSIISVLPWKRIVAVSAKKKNSKKGQPNSSYQNNITHLNNENLKKSLSCANLSTFAQPPPAQPPAPPANQLSGSQTGVSSSVKKAPHPSVTSAGTPKRVIVQASTSELLRCLGEFLCRRCYRLKHLSPTDPVLWLRSVDRSLLLQGWQDQGFITPANVVFLYMLCRDVISSEVGSDHELQAVLLTCLYLSYSYVGNEISYPLKPFLVESCKEAFWDRCLSVINLMSSKMLQINADPHYFTQAFSDLKNESGQEDKKRLLLGLDR</sequence>
<name>CD5R1_SPECI</name>
<gene>
    <name type="primary">CDK5R1</name>
</gene>
<reference key="1">
    <citation type="submission" date="2004-06" db="EMBL/GenBank/DDBJ databases">
        <title>Molecular cloning of cyclin-dependent kinase 5, regulatory subunit (p35) of Spermophilus citellus.</title>
        <authorList>
            <person name="Stieler J.T."/>
            <person name="Siegemund T."/>
            <person name="Strijkstra A.M."/>
        </authorList>
    </citation>
    <scope>NUCLEOTIDE SEQUENCE [MRNA]</scope>
</reference>
<organism>
    <name type="scientific">Spermophilus citellus</name>
    <name type="common">European ground squirrel</name>
    <name type="synonym">Citellus citellus</name>
    <dbReference type="NCBI Taxonomy" id="9997"/>
    <lineage>
        <taxon>Eukaryota</taxon>
        <taxon>Metazoa</taxon>
        <taxon>Chordata</taxon>
        <taxon>Craniata</taxon>
        <taxon>Vertebrata</taxon>
        <taxon>Euteleostomi</taxon>
        <taxon>Mammalia</taxon>
        <taxon>Eutheria</taxon>
        <taxon>Euarchontoglires</taxon>
        <taxon>Glires</taxon>
        <taxon>Rodentia</taxon>
        <taxon>Sciuromorpha</taxon>
        <taxon>Sciuridae</taxon>
        <taxon>Xerinae</taxon>
        <taxon>Marmotini</taxon>
        <taxon>Spermophilus</taxon>
    </lineage>
</organism>
<accession>Q4KYY2</accession>
<proteinExistence type="evidence at transcript level"/>
<dbReference type="EMBL" id="AY654896">
    <property type="protein sequence ID" value="AAV64183.1"/>
    <property type="molecule type" value="mRNA"/>
</dbReference>
<dbReference type="SMR" id="Q4KYY2"/>
<dbReference type="GO" id="GO:0030426">
    <property type="term" value="C:growth cone"/>
    <property type="evidence" value="ECO:0007669"/>
    <property type="project" value="TreeGrafter"/>
</dbReference>
<dbReference type="GO" id="GO:0005634">
    <property type="term" value="C:nucleus"/>
    <property type="evidence" value="ECO:0007669"/>
    <property type="project" value="UniProtKB-SubCell"/>
</dbReference>
<dbReference type="GO" id="GO:0043204">
    <property type="term" value="C:perikaryon"/>
    <property type="evidence" value="ECO:0007669"/>
    <property type="project" value="UniProtKB-SubCell"/>
</dbReference>
<dbReference type="GO" id="GO:0048471">
    <property type="term" value="C:perinuclear region of cytoplasm"/>
    <property type="evidence" value="ECO:0007669"/>
    <property type="project" value="UniProtKB-SubCell"/>
</dbReference>
<dbReference type="GO" id="GO:0005886">
    <property type="term" value="C:plasma membrane"/>
    <property type="evidence" value="ECO:0007669"/>
    <property type="project" value="UniProtKB-SubCell"/>
</dbReference>
<dbReference type="GO" id="GO:0014069">
    <property type="term" value="C:postsynaptic density"/>
    <property type="evidence" value="ECO:0000250"/>
    <property type="project" value="UniProtKB"/>
</dbReference>
<dbReference type="GO" id="GO:0016533">
    <property type="term" value="C:protein kinase 5 complex"/>
    <property type="evidence" value="ECO:0007669"/>
    <property type="project" value="InterPro"/>
</dbReference>
<dbReference type="GO" id="GO:0061575">
    <property type="term" value="F:cyclin-dependent protein serine/threonine kinase activator activity"/>
    <property type="evidence" value="ECO:0007669"/>
    <property type="project" value="InterPro"/>
</dbReference>
<dbReference type="GO" id="GO:0019901">
    <property type="term" value="F:protein kinase binding"/>
    <property type="evidence" value="ECO:0007669"/>
    <property type="project" value="TreeGrafter"/>
</dbReference>
<dbReference type="GO" id="GO:0007411">
    <property type="term" value="P:axon guidance"/>
    <property type="evidence" value="ECO:0007669"/>
    <property type="project" value="TreeGrafter"/>
</dbReference>
<dbReference type="GO" id="GO:0007420">
    <property type="term" value="P:brain development"/>
    <property type="evidence" value="ECO:0007669"/>
    <property type="project" value="TreeGrafter"/>
</dbReference>
<dbReference type="GO" id="GO:0048013">
    <property type="term" value="P:ephrin receptor signaling pathway"/>
    <property type="evidence" value="ECO:0000250"/>
    <property type="project" value="UniProtKB"/>
</dbReference>
<dbReference type="GO" id="GO:0061001">
    <property type="term" value="P:regulation of dendritic spine morphogenesis"/>
    <property type="evidence" value="ECO:0000250"/>
    <property type="project" value="UniProtKB"/>
</dbReference>
<dbReference type="GO" id="GO:0048511">
    <property type="term" value="P:rhythmic process"/>
    <property type="evidence" value="ECO:0007669"/>
    <property type="project" value="UniProtKB-KW"/>
</dbReference>
<dbReference type="FunFam" id="1.10.472.10:FF:000025">
    <property type="entry name" value="Cyclin-dependent kinase 5 activator"/>
    <property type="match status" value="1"/>
</dbReference>
<dbReference type="Gene3D" id="1.10.472.10">
    <property type="entry name" value="Cyclin-like"/>
    <property type="match status" value="1"/>
</dbReference>
<dbReference type="InterPro" id="IPR004944">
    <property type="entry name" value="CDK5_activator"/>
</dbReference>
<dbReference type="InterPro" id="IPR036915">
    <property type="entry name" value="Cyclin-like_sf"/>
</dbReference>
<dbReference type="PANTHER" id="PTHR23401">
    <property type="entry name" value="CYCLIN DEPENDANT KINASE-5 ACTIVATOR"/>
    <property type="match status" value="1"/>
</dbReference>
<dbReference type="PANTHER" id="PTHR23401:SF2">
    <property type="entry name" value="CYCLIN-DEPENDENT KINASE 5 ACTIVATOR 1"/>
    <property type="match status" value="1"/>
</dbReference>
<dbReference type="Pfam" id="PF03261">
    <property type="entry name" value="CDK5_activator"/>
    <property type="match status" value="1"/>
</dbReference>
<dbReference type="PIRSF" id="PIRSF009324">
    <property type="entry name" value="Cdk5_activator"/>
    <property type="match status" value="1"/>
</dbReference>
<dbReference type="SUPFAM" id="SSF47954">
    <property type="entry name" value="Cyclin-like"/>
    <property type="match status" value="1"/>
</dbReference>
<protein>
    <recommendedName>
        <fullName>Cyclin-dependent kinase 5 activator 1</fullName>
        <shortName>CDK5 activator 1</shortName>
    </recommendedName>
    <alternativeName>
        <fullName>Cyclin-dependent kinase 5 regulatory subunit 1</fullName>
    </alternativeName>
    <component>
        <recommendedName>
            <fullName>Cyclin-dependent kinase 5 activator 1, p35</fullName>
        </recommendedName>
    </component>
    <component>
        <recommendedName>
            <fullName>Cyclin-dependent kinase 5 activator 1, p25</fullName>
        </recommendedName>
    </component>
</protein>
<comment type="function">
    <text evidence="2">p35 is a neuron specific activator of CDK5. The complex p35/CDK5 is required for neurite outgrowth and cortical lamination. Involved in dendritic spine morphogenesis by mediating the EFNA1-EPHA4 signaling. Activator of TPKII. The complex p35/CDK5 participates in the regulation of the circadian clock by modulating the function of CLOCK protein: phosphorylates CLOCK at 'Thr-451' and 'Thr-461' and regulates the transcriptional activity of the CLOCK-BMAL1 heterodimer in association with altered stability and subcellular distribution.</text>
</comment>
<comment type="subunit">
    <text evidence="1 2">Heterodimer composed of a catalytic subunit CDK5 and a regulatory subunit CDK5R1 (p25) and macromolecular complex composed of at least CDK5, CDK5R1 (p35) and CDK5RAP1 or CDK5RAP2 or CDK5RAP3. Only the heterodimer shows kinase activity (By similarity). Interacts with EPHA4 and NGEF; may mediate the activation of NGEF by EPHA4 (By similarity). Interacts with RASGRF2. The complex p35/CDK5 interacts with CLOCK (By similarity).</text>
</comment>
<comment type="subcellular location">
    <molecule>Cyclin-dependent kinase 5 activator 1, p35</molecule>
    <subcellularLocation>
        <location evidence="2">Cell membrane</location>
        <topology evidence="2">Lipid-anchor</topology>
        <orientation evidence="2">Cytoplasmic side</orientation>
    </subcellularLocation>
    <subcellularLocation>
        <location evidence="2">Cell projection</location>
        <location evidence="2">Neuron projection</location>
    </subcellularLocation>
    <text evidence="2">In the primary cortical neurons, p35 is present in the peripheries and nerve terminals.</text>
</comment>
<comment type="subcellular location">
    <molecule>Cyclin-dependent kinase 5 activator 1, p25</molecule>
    <subcellularLocation>
        <location evidence="2">Nucleus</location>
    </subcellularLocation>
    <subcellularLocation>
        <location evidence="2">Cytoplasm</location>
        <location evidence="2">Perinuclear region</location>
    </subcellularLocation>
    <subcellularLocation>
        <location evidence="2">Perikaryon</location>
    </subcellularLocation>
    <text evidence="2">The conversion of p35 to p25 relocalizes the protein from the cell periphery to the cytoplasm, in nuclear and perinuclear regions. In the primary cortical neurons, p25 is primarily concentrated in the cell soma and is largely absent from neurites.</text>
</comment>
<comment type="tissue specificity">
    <text>Brain and neuron specific.</text>
</comment>
<comment type="PTM">
    <text evidence="1">The p35 form is proteolytically cleaved by calpain, giving rise to the p25 form. P35 has a 5 to 10 fold shorter half-life compared to p25. The conversion results in deregulation of the CDK5 kinase: p25/CDK5 kinase displays an increased and altered tau phosphorylation in comparison to the p35/CDK5 kinase in vivo (By similarity).</text>
</comment>
<comment type="PTM">
    <text evidence="2">Myristoylated. A proper myristoylation signal is essential for the proper distribution of p35 (By similarity).</text>
</comment>
<comment type="PTM">
    <text evidence="2">Phosphorylation at Ser-8 and Thr-138 by CDK5 prevents calpain-mediated proteolysis.</text>
</comment>
<comment type="PTM">
    <text evidence="2">Ubiquitinated, leading to its degradation: degradation of p35 by proteasome results in down-regulation of CDK5 activity. During this process, CDK5 phosphorylates p35 and induces its ubiquitination and subsequent degradation. Ubiquitinated by the CRL2(FEM1B) complex, which recognizes the -Gly-Leu-Asp-Arg C-degron at the C-terminus, leading to its degradation.</text>
</comment>
<comment type="similarity">
    <text evidence="4">Belongs to the cyclin-dependent kinase 5 activator family.</text>
</comment>
<keyword id="KW-0090">Biological rhythms</keyword>
<keyword id="KW-1003">Cell membrane</keyword>
<keyword id="KW-0966">Cell projection</keyword>
<keyword id="KW-0963">Cytoplasm</keyword>
<keyword id="KW-0449">Lipoprotein</keyword>
<keyword id="KW-0472">Membrane</keyword>
<keyword id="KW-0539">Nucleus</keyword>
<keyword id="KW-0597">Phosphoprotein</keyword>
<keyword id="KW-0832">Ubl conjugation</keyword>
<evidence type="ECO:0000250" key="1">
    <source>
        <dbReference type="UniProtKB" id="P61809"/>
    </source>
</evidence>
<evidence type="ECO:0000250" key="2">
    <source>
        <dbReference type="UniProtKB" id="Q15078"/>
    </source>
</evidence>
<evidence type="ECO:0000256" key="3">
    <source>
        <dbReference type="SAM" id="MobiDB-lite"/>
    </source>
</evidence>
<evidence type="ECO:0000305" key="4"/>
<feature type="chain" id="PRO_0000250504" description="Cyclin-dependent kinase 5 activator 1, p35">
    <location>
        <begin position="1"/>
        <end position="307"/>
    </location>
</feature>
<feature type="chain" id="PRO_0000250505" description="Cyclin-dependent kinase 5 activator 1, p25">
    <location>
        <begin position="99"/>
        <end position="307"/>
    </location>
</feature>
<feature type="region of interest" description="Disordered" evidence="3">
    <location>
        <begin position="96"/>
        <end position="136"/>
    </location>
</feature>
<feature type="compositionally biased region" description="Pro residues" evidence="3">
    <location>
        <begin position="100"/>
        <end position="110"/>
    </location>
</feature>
<feature type="compositionally biased region" description="Polar residues" evidence="3">
    <location>
        <begin position="112"/>
        <end position="125"/>
    </location>
</feature>
<feature type="site" description="Cleavage; by calpain" evidence="1">
    <location>
        <begin position="98"/>
        <end position="99"/>
    </location>
</feature>
<feature type="modified residue" description="Phosphoserine; by CDK5" evidence="2">
    <location>
        <position position="8"/>
    </location>
</feature>
<feature type="modified residue" description="Phosphothreonine; by CDK5" evidence="2">
    <location>
        <position position="138"/>
    </location>
</feature>